<geneLocation type="mitochondrion"/>
<gene>
    <name type="primary">MT-ND4L</name>
    <name type="synonym">MTND4L</name>
    <name type="synonym">NADH4L</name>
    <name type="synonym">ND4L</name>
</gene>
<sequence>MPSIFTNIILAFATALLGTLVFRSHLMSSLLCLEGMMLSLFTLSTLIILNMHLTMSFMMPILLLVFAACEAAIGLALLVMVSNTYGLDYIKNLSLLQC</sequence>
<evidence type="ECO:0000250" key="1">
    <source>
        <dbReference type="UniProtKB" id="P03901"/>
    </source>
</evidence>
<evidence type="ECO:0000250" key="2">
    <source>
        <dbReference type="UniProtKB" id="P03902"/>
    </source>
</evidence>
<evidence type="ECO:0000255" key="3"/>
<evidence type="ECO:0000305" key="4"/>
<organism>
    <name type="scientific">Avahi laniger</name>
    <name type="common">Eastern woolly lemur</name>
    <dbReference type="NCBI Taxonomy" id="122246"/>
    <lineage>
        <taxon>Eukaryota</taxon>
        <taxon>Metazoa</taxon>
        <taxon>Chordata</taxon>
        <taxon>Craniata</taxon>
        <taxon>Vertebrata</taxon>
        <taxon>Euteleostomi</taxon>
        <taxon>Mammalia</taxon>
        <taxon>Eutheria</taxon>
        <taxon>Euarchontoglires</taxon>
        <taxon>Primates</taxon>
        <taxon>Strepsirrhini</taxon>
        <taxon>Lemuriformes</taxon>
        <taxon>Indriidae</taxon>
        <taxon>Avahi</taxon>
    </lineage>
</organism>
<accession>Q9B8T9</accession>
<protein>
    <recommendedName>
        <fullName>NADH-ubiquinone oxidoreductase chain 4L</fullName>
        <ecNumber>7.1.1.2</ecNumber>
    </recommendedName>
    <alternativeName>
        <fullName>NADH dehydrogenase subunit 4L</fullName>
    </alternativeName>
</protein>
<feature type="chain" id="PRO_0000118393" description="NADH-ubiquinone oxidoreductase chain 4L">
    <location>
        <begin position="1"/>
        <end position="98"/>
    </location>
</feature>
<feature type="transmembrane region" description="Helical" evidence="3">
    <location>
        <begin position="2"/>
        <end position="22"/>
    </location>
</feature>
<feature type="transmembrane region" description="Helical" evidence="3">
    <location>
        <begin position="29"/>
        <end position="49"/>
    </location>
</feature>
<feature type="transmembrane region" description="Helical" evidence="3">
    <location>
        <begin position="61"/>
        <end position="81"/>
    </location>
</feature>
<reference key="1">
    <citation type="journal article" date="2001" name="Am. J. Primatol.">
        <title>Phylogenetic history of sifakas (Propithecus: lemuriformes) derived from mtDNA sequences.</title>
        <authorList>
            <person name="Pastorini J."/>
            <person name="Forstner M.R."/>
            <person name="Martin R.D."/>
        </authorList>
    </citation>
    <scope>NUCLEOTIDE SEQUENCE [GENOMIC DNA]</scope>
</reference>
<dbReference type="EC" id="7.1.1.2"/>
<dbReference type="EMBL" id="AF224598">
    <property type="protein sequence ID" value="AAG54011.1"/>
    <property type="molecule type" value="Genomic_DNA"/>
</dbReference>
<dbReference type="RefSeq" id="YP_008378886.1">
    <property type="nucleotide sequence ID" value="NC_021940.1"/>
</dbReference>
<dbReference type="SMR" id="Q9B8T9"/>
<dbReference type="GeneID" id="16488934"/>
<dbReference type="CTD" id="4539"/>
<dbReference type="GO" id="GO:0005743">
    <property type="term" value="C:mitochondrial inner membrane"/>
    <property type="evidence" value="ECO:0000250"/>
    <property type="project" value="UniProtKB"/>
</dbReference>
<dbReference type="GO" id="GO:0045271">
    <property type="term" value="C:respiratory chain complex I"/>
    <property type="evidence" value="ECO:0000250"/>
    <property type="project" value="UniProtKB"/>
</dbReference>
<dbReference type="GO" id="GO:0008137">
    <property type="term" value="F:NADH dehydrogenase (ubiquinone) activity"/>
    <property type="evidence" value="ECO:0000250"/>
    <property type="project" value="UniProtKB"/>
</dbReference>
<dbReference type="GO" id="GO:0042773">
    <property type="term" value="P:ATP synthesis coupled electron transport"/>
    <property type="evidence" value="ECO:0007669"/>
    <property type="project" value="InterPro"/>
</dbReference>
<dbReference type="FunFam" id="1.10.287.3510:FF:000002">
    <property type="entry name" value="NADH-ubiquinone oxidoreductase chain 4L"/>
    <property type="match status" value="1"/>
</dbReference>
<dbReference type="Gene3D" id="1.10.287.3510">
    <property type="match status" value="1"/>
</dbReference>
<dbReference type="InterPro" id="IPR001133">
    <property type="entry name" value="NADH_UbQ_OxRdtase_chain4L/K"/>
</dbReference>
<dbReference type="InterPro" id="IPR039428">
    <property type="entry name" value="NUOK/Mnh_C1-like"/>
</dbReference>
<dbReference type="PANTHER" id="PTHR11434:SF0">
    <property type="entry name" value="NADH-UBIQUINONE OXIDOREDUCTASE CHAIN 4L"/>
    <property type="match status" value="1"/>
</dbReference>
<dbReference type="PANTHER" id="PTHR11434">
    <property type="entry name" value="NADH-UBIQUINONE OXIDOREDUCTASE SUBUNIT ND4L"/>
    <property type="match status" value="1"/>
</dbReference>
<dbReference type="Pfam" id="PF00420">
    <property type="entry name" value="Oxidored_q2"/>
    <property type="match status" value="1"/>
</dbReference>
<comment type="function">
    <text evidence="1">Core subunit of the mitochondrial membrane respiratory chain NADH dehydrogenase (Complex I) which catalyzes electron transfer from NADH through the respiratory chain, using ubiquinone as an electron acceptor. Part of the enzyme membrane arm which is embedded in the lipid bilayer and involved in proton translocation.</text>
</comment>
<comment type="catalytic activity">
    <reaction evidence="1">
        <text>a ubiquinone + NADH + 5 H(+)(in) = a ubiquinol + NAD(+) + 4 H(+)(out)</text>
        <dbReference type="Rhea" id="RHEA:29091"/>
        <dbReference type="Rhea" id="RHEA-COMP:9565"/>
        <dbReference type="Rhea" id="RHEA-COMP:9566"/>
        <dbReference type="ChEBI" id="CHEBI:15378"/>
        <dbReference type="ChEBI" id="CHEBI:16389"/>
        <dbReference type="ChEBI" id="CHEBI:17976"/>
        <dbReference type="ChEBI" id="CHEBI:57540"/>
        <dbReference type="ChEBI" id="CHEBI:57945"/>
        <dbReference type="EC" id="7.1.1.2"/>
    </reaction>
    <physiologicalReaction direction="left-to-right" evidence="1">
        <dbReference type="Rhea" id="RHEA:29092"/>
    </physiologicalReaction>
</comment>
<comment type="subunit">
    <text evidence="2">Core subunit of respiratory chain NADH dehydrogenase (Complex I) which is composed of 45 different subunits.</text>
</comment>
<comment type="subcellular location">
    <subcellularLocation>
        <location evidence="2">Mitochondrion inner membrane</location>
        <topology evidence="3">Multi-pass membrane protein</topology>
    </subcellularLocation>
</comment>
<comment type="similarity">
    <text evidence="4">Belongs to the complex I subunit 4L family.</text>
</comment>
<keyword id="KW-0249">Electron transport</keyword>
<keyword id="KW-0472">Membrane</keyword>
<keyword id="KW-0496">Mitochondrion</keyword>
<keyword id="KW-0999">Mitochondrion inner membrane</keyword>
<keyword id="KW-0520">NAD</keyword>
<keyword id="KW-0679">Respiratory chain</keyword>
<keyword id="KW-1278">Translocase</keyword>
<keyword id="KW-0812">Transmembrane</keyword>
<keyword id="KW-1133">Transmembrane helix</keyword>
<keyword id="KW-0813">Transport</keyword>
<keyword id="KW-0830">Ubiquinone</keyword>
<name>NU4LM_AVALA</name>
<proteinExistence type="inferred from homology"/>